<comment type="function">
    <text evidence="1">Binds to sialic acid-containing receptors on the cell surface, bringing about the attachment of the virus particle to the cell. This attachment induces virion internalization either through clathrin-dependent endocytosis or through clathrin- and caveolin-independent pathway. Plays a major role in the determination of host range restriction and virulence. Class I viral fusion protein. Responsible for penetration of the virus into the cell cytoplasm by mediating the fusion of the membrane of the endocytosed virus particle with the endosomal membrane. Low pH in endosomes induces an irreversible conformational change in HA2, releasing the fusion hydrophobic peptide. Several trimers are required to form a competent fusion pore.</text>
</comment>
<comment type="subunit">
    <text evidence="1">Homotrimer of disulfide-linked HA1-HA2.</text>
</comment>
<comment type="subcellular location">
    <subcellularLocation>
        <location evidence="1">Virion membrane</location>
        <topology evidence="1">Single-pass type I membrane protein</topology>
    </subcellularLocation>
    <subcellularLocation>
        <location evidence="1">Host apical cell membrane</location>
        <topology evidence="1">Single-pass type I membrane protein</topology>
    </subcellularLocation>
    <text evidence="1">Targeted to the apical plasma membrane in epithelial polarized cells through a signal present in the transmembrane domain. Associated with glycosphingolipid- and cholesterol-enriched detergent-resistant lipid rafts.</text>
</comment>
<comment type="PTM">
    <text evidence="1">Palmitoylated.</text>
</comment>
<comment type="PTM">
    <text evidence="1">In natural infection, inactive HA is matured into HA1 and HA2 outside the cell by one or more trypsin-like, arginine-specific endoprotease secreted by the bronchial epithelial cells. One identified protease that may be involved in this process is secreted in lungs by club cells.</text>
</comment>
<comment type="miscellaneous">
    <text>Major glycoprotein, comprises over 80% of the envelope proteins present in virus particle.</text>
</comment>
<comment type="miscellaneous">
    <text>The extent of infection into host organism is determined by HA. Influenza viruses bud from the apical surface of polarized epithelial cells (e.g. bronchial epithelial cells) into lumen of lungs and are therefore usually pneumotropic. The reason is that HA is cleaved by tryptase clara which is restricted to lungs. However, HAs of H5 and H7 pantropic avian viruses subtypes can be cleaved by furin and subtilisin-type enzymes, allowing the virus to grow in other organs than lungs.</text>
</comment>
<comment type="miscellaneous">
    <text>The influenza A genome consist of 8 RNA segments. Genetic variation of hemagglutinin and/or neuraminidase genes results in the emergence of new influenza strains. The mechanism of variation can be the result of point mutations or the result of genetic reassortment between segments of two different strains.</text>
</comment>
<comment type="similarity">
    <text evidence="1">Belongs to the influenza viruses hemagglutinin family.</text>
</comment>
<dbReference type="EMBL" id="M16739">
    <property type="protein sequence ID" value="AAA43145.1"/>
    <property type="molecule type" value="Genomic_RNA"/>
</dbReference>
<dbReference type="SMR" id="P12584"/>
<dbReference type="GlyCosmos" id="P12584">
    <property type="glycosylation" value="6 sites, No reported glycans"/>
</dbReference>
<dbReference type="GO" id="GO:0020002">
    <property type="term" value="C:host cell plasma membrane"/>
    <property type="evidence" value="ECO:0007669"/>
    <property type="project" value="UniProtKB-SubCell"/>
</dbReference>
<dbReference type="GO" id="GO:0016020">
    <property type="term" value="C:membrane"/>
    <property type="evidence" value="ECO:0007669"/>
    <property type="project" value="UniProtKB-KW"/>
</dbReference>
<dbReference type="GO" id="GO:0019031">
    <property type="term" value="C:viral envelope"/>
    <property type="evidence" value="ECO:0007669"/>
    <property type="project" value="UniProtKB-KW"/>
</dbReference>
<dbReference type="GO" id="GO:0055036">
    <property type="term" value="C:virion membrane"/>
    <property type="evidence" value="ECO:0007669"/>
    <property type="project" value="UniProtKB-SubCell"/>
</dbReference>
<dbReference type="GO" id="GO:0046789">
    <property type="term" value="F:host cell surface receptor binding"/>
    <property type="evidence" value="ECO:0007669"/>
    <property type="project" value="InterPro"/>
</dbReference>
<dbReference type="GO" id="GO:0075512">
    <property type="term" value="P:clathrin-dependent endocytosis of virus by host cell"/>
    <property type="evidence" value="ECO:0007669"/>
    <property type="project" value="UniProtKB-KW"/>
</dbReference>
<dbReference type="GO" id="GO:0039654">
    <property type="term" value="P:fusion of virus membrane with host endosome membrane"/>
    <property type="evidence" value="ECO:0007669"/>
    <property type="project" value="UniProtKB-KW"/>
</dbReference>
<dbReference type="GO" id="GO:0019064">
    <property type="term" value="P:fusion of virus membrane with host plasma membrane"/>
    <property type="evidence" value="ECO:0007669"/>
    <property type="project" value="InterPro"/>
</dbReference>
<dbReference type="GO" id="GO:0019062">
    <property type="term" value="P:virion attachment to host cell"/>
    <property type="evidence" value="ECO:0007669"/>
    <property type="project" value="UniProtKB-KW"/>
</dbReference>
<dbReference type="FunFam" id="3.90.20.10:FF:000001">
    <property type="entry name" value="Hemagglutinin"/>
    <property type="match status" value="1"/>
</dbReference>
<dbReference type="FunFam" id="3.90.209.20:FF:000001">
    <property type="entry name" value="Hemagglutinin"/>
    <property type="match status" value="1"/>
</dbReference>
<dbReference type="Gene3D" id="3.90.20.10">
    <property type="match status" value="1"/>
</dbReference>
<dbReference type="Gene3D" id="3.90.209.20">
    <property type="match status" value="1"/>
</dbReference>
<dbReference type="HAMAP" id="MF_04072">
    <property type="entry name" value="INFV_HEMA"/>
    <property type="match status" value="1"/>
</dbReference>
<dbReference type="InterPro" id="IPR008980">
    <property type="entry name" value="Capsid_hemagglutn"/>
</dbReference>
<dbReference type="InterPro" id="IPR013828">
    <property type="entry name" value="Hemagglutn_HA1_a/b_dom_sf"/>
</dbReference>
<dbReference type="InterPro" id="IPR000149">
    <property type="entry name" value="Hemagglutn_influenz_A"/>
</dbReference>
<dbReference type="InterPro" id="IPR001364">
    <property type="entry name" value="Hemagglutn_influenz_A/B"/>
</dbReference>
<dbReference type="Pfam" id="PF00509">
    <property type="entry name" value="Hemagglutinin"/>
    <property type="match status" value="1"/>
</dbReference>
<dbReference type="PRINTS" id="PR00330">
    <property type="entry name" value="HEMAGGLUTN1"/>
</dbReference>
<dbReference type="PRINTS" id="PR00329">
    <property type="entry name" value="HEMAGGLUTN12"/>
</dbReference>
<dbReference type="SUPFAM" id="SSF58064">
    <property type="entry name" value="Influenza hemagglutinin (stalk)"/>
    <property type="match status" value="1"/>
</dbReference>
<dbReference type="SUPFAM" id="SSF49818">
    <property type="entry name" value="Viral protein domain"/>
    <property type="match status" value="1"/>
</dbReference>
<reference key="1">
    <citation type="journal article" date="1987" name="Virology">
        <title>Antigenic and genetic conservation of H3 influenza virus in wild ducks.</title>
        <authorList>
            <person name="Kida H."/>
            <person name="Kawaoka Y."/>
            <person name="Naeve C.W."/>
            <person name="Webster R.G."/>
        </authorList>
    </citation>
    <scope>NUCLEOTIDE SEQUENCE [GENOMIC RNA]</scope>
</reference>
<feature type="chain" id="PRO_0000440844" description="Hemagglutinin HA1 chain" evidence="1">
    <location>
        <begin position="1"/>
        <end position="329"/>
    </location>
</feature>
<feature type="chain" id="PRO_0000038921" description="Hemagglutinin HA2 chain" evidence="1">
    <location>
        <begin position="330"/>
        <end position="550"/>
    </location>
</feature>
<feature type="topological domain" description="Extracellular" evidence="1">
    <location>
        <begin position="1"/>
        <end position="514"/>
    </location>
</feature>
<feature type="transmembrane region" description="Helical" evidence="1">
    <location>
        <begin position="515"/>
        <end position="535"/>
    </location>
</feature>
<feature type="topological domain" description="Cytoplasmic" evidence="1">
    <location>
        <begin position="536"/>
        <end position="550"/>
    </location>
</feature>
<feature type="site" description="Cleavage; by host" evidence="1">
    <location>
        <begin position="329"/>
        <end position="330"/>
    </location>
</feature>
<feature type="lipid moiety-binding region" description="S-palmitoyl cysteine; by host" evidence="1">
    <location>
        <position position="539"/>
    </location>
</feature>
<feature type="lipid moiety-binding region" description="S-palmitoyl cysteine; by host" evidence="1">
    <location>
        <position position="546"/>
    </location>
</feature>
<feature type="lipid moiety-binding region" description="S-palmitoyl cysteine; by host" evidence="1">
    <location>
        <position position="549"/>
    </location>
</feature>
<feature type="glycosylation site" description="N-linked (GlcNAc...) asparagine; by host" evidence="1">
    <location>
        <position position="8"/>
    </location>
</feature>
<feature type="glycosylation site" description="N-linked (GlcNAc...) asparagine; by host" evidence="1">
    <location>
        <position position="22"/>
    </location>
</feature>
<feature type="glycosylation site" description="N-linked (GlcNAc...) asparagine; by host" evidence="1">
    <location>
        <position position="38"/>
    </location>
</feature>
<feature type="glycosylation site" description="N-linked (GlcNAc...) asparagine; by host" evidence="1">
    <location>
        <position position="165"/>
    </location>
</feature>
<feature type="glycosylation site" description="N-linked (GlcNAc...) asparagine; by host" evidence="1">
    <location>
        <position position="285"/>
    </location>
</feature>
<feature type="glycosylation site" description="N-linked (GlcNAc...) asparagine; by host" evidence="1">
    <location>
        <position position="483"/>
    </location>
</feature>
<feature type="disulfide bond" description="Interchain (between HA1 and HA2 chains)" evidence="1">
    <location>
        <begin position="14"/>
        <end position="466"/>
    </location>
</feature>
<feature type="disulfide bond" evidence="1">
    <location>
        <begin position="52"/>
        <end position="277"/>
    </location>
</feature>
<feature type="disulfide bond" evidence="1">
    <location>
        <begin position="64"/>
        <end position="76"/>
    </location>
</feature>
<feature type="disulfide bond" evidence="1">
    <location>
        <begin position="97"/>
        <end position="139"/>
    </location>
</feature>
<feature type="disulfide bond" evidence="1">
    <location>
        <begin position="281"/>
        <end position="305"/>
    </location>
</feature>
<feature type="disulfide bond" evidence="1">
    <location>
        <begin position="473"/>
        <end position="477"/>
    </location>
</feature>
<feature type="non-terminal residue">
    <location>
        <position position="1"/>
    </location>
</feature>
<accession>P12584</accession>
<accession>Q84012</accession>
<accession>Q89793</accession>
<sequence>QDLPGNDNSTATLCLGHHAVPNGTLVKTITDDQIEVTNATELVQSSSTGKICNNPHRILDGRDCTLIDALLGDPHCDVFQDETWDLFVERSNAFSNCYPYDVPDYASLRSLVASSGTLEFITEGFTWTGVTQNGGSNACKRGPASGFFSRLNWLTKSGSTYPVLNVTMPNNDNFDKLYIWGVHHPSTNQEQTNLYVQASGGVTVSTRRSQQTIIPNIGSRPWVRGQSGRISIYWTVVKPGDVLVINSNGNLIAPRGYFKMRTGKSSIMRSDAPIDTCISECITPNGSIPNDKPFQNVNKITYGACPKYVKQNTLKLATGMRNVPEKQTRGLFGAIAGFIENGWEGMIDGWYGFRHQNSEGTGQAADLKSTQAAIDQINGKLNRVIEKTNEKFHQIEKEFSEVEGRIQDLEKYVEDTKIDLWSYNADVLVALENQHTIDLTDSEMNKLFEKTRRQLRENAEDMGNGCFKIYHKCDNACIESIRNGTYDHDIYRDEALNNRFQIKGVELKSGYKDWILWISFAISCFLLCVVLLGFIMWACQRGNIRCNICI</sequence>
<keyword id="KW-1167">Clathrin- and caveolin-independent endocytosis of virus by host</keyword>
<keyword id="KW-1165">Clathrin-mediated endocytosis of virus by host</keyword>
<keyword id="KW-1015">Disulfide bond</keyword>
<keyword id="KW-1170">Fusion of virus membrane with host endosomal membrane</keyword>
<keyword id="KW-1168">Fusion of virus membrane with host membrane</keyword>
<keyword id="KW-0325">Glycoprotein</keyword>
<keyword id="KW-0348">Hemagglutinin</keyword>
<keyword id="KW-1032">Host cell membrane</keyword>
<keyword id="KW-1043">Host membrane</keyword>
<keyword id="KW-0945">Host-virus interaction</keyword>
<keyword id="KW-0449">Lipoprotein</keyword>
<keyword id="KW-0472">Membrane</keyword>
<keyword id="KW-0564">Palmitate</keyword>
<keyword id="KW-0812">Transmembrane</keyword>
<keyword id="KW-1133">Transmembrane helix</keyword>
<keyword id="KW-1161">Viral attachment to host cell</keyword>
<keyword id="KW-0261">Viral envelope protein</keyword>
<keyword id="KW-1162">Viral penetration into host cytoplasm</keyword>
<keyword id="KW-0946">Virion</keyword>
<keyword id="KW-1164">Virus endocytosis by host</keyword>
<keyword id="KW-1160">Virus entry into host cell</keyword>
<proteinExistence type="inferred from homology"/>
<gene>
    <name evidence="1" type="primary">HA</name>
</gene>
<name>HEMA_I80A7</name>
<organism>
    <name type="scientific">Influenza A virus (strain A/Duck/Hokkaido/33/1980 H3N8)</name>
    <dbReference type="NCBI Taxonomy" id="11359"/>
    <lineage>
        <taxon>Viruses</taxon>
        <taxon>Riboviria</taxon>
        <taxon>Orthornavirae</taxon>
        <taxon>Negarnaviricota</taxon>
        <taxon>Polyploviricotina</taxon>
        <taxon>Insthoviricetes</taxon>
        <taxon>Articulavirales</taxon>
        <taxon>Orthomyxoviridae</taxon>
        <taxon>Alphainfluenzavirus</taxon>
        <taxon>Alphainfluenzavirus influenzae</taxon>
        <taxon>Influenza A virus</taxon>
    </lineage>
</organism>
<protein>
    <recommendedName>
        <fullName evidence="1">Hemagglutinin</fullName>
    </recommendedName>
    <component>
        <recommendedName>
            <fullName evidence="1">Hemagglutinin HA1 chain</fullName>
        </recommendedName>
    </component>
    <component>
        <recommendedName>
            <fullName evidence="1">Hemagglutinin HA2 chain</fullName>
        </recommendedName>
    </component>
</protein>
<evidence type="ECO:0000255" key="1">
    <source>
        <dbReference type="HAMAP-Rule" id="MF_04072"/>
    </source>
</evidence>
<organismHost>
    <name type="scientific">Aves</name>
    <dbReference type="NCBI Taxonomy" id="8782"/>
</organismHost>
<organismHost>
    <name type="scientific">Equus caballus</name>
    <name type="common">Horse</name>
    <dbReference type="NCBI Taxonomy" id="9796"/>
</organismHost>